<comment type="function">
    <text evidence="6 7">Transports pyruvate with a high affinity and specificity. The process is driven by the proton motive force (PubMed:29061664). Under nutrient limiting conditions, mediates the uptake of pyruvate, thus enabling it to be used as a carbon source for the growth and survival (PubMed:29061664). Part of a nutrient-sensing regulatory network composed of the two-component regulatory systems BtsS/BtsR and YpdA/YpdB, and their respective target proteins, BtsT and YhjX (PubMed:24659770).</text>
</comment>
<comment type="catalytic activity">
    <reaction evidence="7">
        <text>pyruvate(out) + H(+)(out) = pyruvate(in) + H(+)(in)</text>
        <dbReference type="Rhea" id="RHEA:64720"/>
        <dbReference type="ChEBI" id="CHEBI:15361"/>
        <dbReference type="ChEBI" id="CHEBI:15378"/>
    </reaction>
    <physiologicalReaction direction="left-to-right" evidence="7">
        <dbReference type="Rhea" id="RHEA:64721"/>
    </physiologicalReaction>
</comment>
<comment type="activity regulation">
    <text evidence="7">Transport is inhibited by the protonophores 2,4-dinitrophenol (DNP) and carbonyl cyanide m-chlorophenyl hydrazone (CCCP), but not by ionophores such as valinomycin, nonactin and nigericin.</text>
</comment>
<comment type="biophysicochemical properties">
    <kinetics>
        <KM evidence="7">16.5 uM for pyruvate</KM>
    </kinetics>
    <phDependence>
        <text evidence="7">Optimum pH is 7.5.</text>
    </phDependence>
</comment>
<comment type="subunit">
    <text evidence="6">Interacts with BtsS and YpdA.</text>
</comment>
<comment type="subcellular location">
    <subcellularLocation>
        <location evidence="3 5 7">Cell inner membrane</location>
        <topology evidence="11">Multi-pass membrane protein</topology>
    </subcellularLocation>
</comment>
<comment type="induction">
    <text evidence="4 5 6">Strongly induced at the onset of the stationary-growth phase. Expression is dependent on the BtsS/BtsR two-component regulatory system, and on cAMP and the cAMP receptor protein (CRP). Repressed by LeuO. Monocistronic operon. Regulated at post-transcriptional level by CsrA (PubMed:24659770).</text>
</comment>
<comment type="similarity">
    <text evidence="9">Belongs to the peptide transporter carbon starvation (CstA) (TC 2.A.114) family.</text>
</comment>
<comment type="sequence caution" evidence="9">
    <conflict type="erroneous initiation">
        <sequence resource="EMBL-CDS" id="AAA97251"/>
    </conflict>
</comment>
<proteinExistence type="evidence at protein level"/>
<keyword id="KW-0997">Cell inner membrane</keyword>
<keyword id="KW-1003">Cell membrane</keyword>
<keyword id="KW-0472">Membrane</keyword>
<keyword id="KW-1185">Reference proteome</keyword>
<keyword id="KW-0769">Symport</keyword>
<keyword id="KW-0812">Transmembrane</keyword>
<keyword id="KW-1133">Transmembrane helix</keyword>
<keyword id="KW-0813">Transport</keyword>
<protein>
    <recommendedName>
        <fullName evidence="9">Pyruvate/proton symporter BtsT</fullName>
    </recommendedName>
    <alternativeName>
        <fullName evidence="8">Brenztraubensaure transporter</fullName>
    </alternativeName>
    <alternativeName>
        <fullName evidence="8">Pyruvate/H(+) symporter</fullName>
    </alternativeName>
</protein>
<name>BTST_ECOLI</name>
<feature type="chain" id="PRO_0000190050" description="Pyruvate/proton symporter BtsT">
    <location>
        <begin position="1"/>
        <end position="716"/>
    </location>
</feature>
<feature type="topological domain" description="Cytoplasmic" evidence="7">
    <location>
        <begin position="1"/>
        <end position="5"/>
    </location>
</feature>
<feature type="transmembrane region" description="Helical" evidence="1">
    <location>
        <begin position="6"/>
        <end position="26"/>
    </location>
</feature>
<feature type="topological domain" description="Periplasmic" evidence="10">
    <location>
        <begin position="27"/>
        <end position="30"/>
    </location>
</feature>
<feature type="transmembrane region" description="Helical" evidence="1">
    <location>
        <begin position="31"/>
        <end position="51"/>
    </location>
</feature>
<feature type="topological domain" description="Cytoplasmic" evidence="10">
    <location>
        <begin position="52"/>
        <end position="88"/>
    </location>
</feature>
<feature type="transmembrane region" description="Helical" evidence="1">
    <location>
        <begin position="89"/>
        <end position="109"/>
    </location>
</feature>
<feature type="topological domain" description="Periplasmic" evidence="10">
    <location>
        <begin position="110"/>
        <end position="119"/>
    </location>
</feature>
<feature type="transmembrane region" description="Helical" evidence="1">
    <location>
        <begin position="120"/>
        <end position="140"/>
    </location>
</feature>
<feature type="topological domain" description="Cytoplasmic" evidence="10">
    <location>
        <begin position="141"/>
        <end position="163"/>
    </location>
</feature>
<feature type="transmembrane region" description="Helical" evidence="1">
    <location>
        <begin position="164"/>
        <end position="184"/>
    </location>
</feature>
<feature type="topological domain" description="Periplasmic" evidence="10">
    <location>
        <begin position="185"/>
        <end position="191"/>
    </location>
</feature>
<feature type="transmembrane region" description="Helical" evidence="1">
    <location>
        <begin position="192"/>
        <end position="212"/>
    </location>
</feature>
<feature type="topological domain" description="Cytoplasmic" evidence="10">
    <location>
        <begin position="213"/>
        <end position="222"/>
    </location>
</feature>
<feature type="transmembrane region" description="Helical" evidence="1">
    <location>
        <begin position="223"/>
        <end position="243"/>
    </location>
</feature>
<feature type="topological domain" description="Periplasmic" evidence="10">
    <location>
        <begin position="244"/>
        <end position="257"/>
    </location>
</feature>
<feature type="transmembrane region" description="Helical" evidence="1">
    <location>
        <begin position="258"/>
        <end position="278"/>
    </location>
</feature>
<feature type="topological domain" description="Cytoplasmic" evidence="10">
    <location>
        <begin position="279"/>
        <end position="282"/>
    </location>
</feature>
<feature type="transmembrane region" description="Helical" evidence="1">
    <location>
        <begin position="283"/>
        <end position="303"/>
    </location>
</feature>
<feature type="topological domain" description="Periplasmic" evidence="10">
    <location>
        <begin position="304"/>
        <end position="326"/>
    </location>
</feature>
<feature type="transmembrane region" description="Helical" evidence="1">
    <location>
        <begin position="327"/>
        <end position="347"/>
    </location>
</feature>
<feature type="topological domain" description="Cytoplasmic" evidence="10">
    <location>
        <begin position="348"/>
        <end position="374"/>
    </location>
</feature>
<feature type="transmembrane region" description="Helical" evidence="1">
    <location>
        <begin position="375"/>
        <end position="395"/>
    </location>
</feature>
<feature type="topological domain" description="Periplasmic" evidence="10">
    <location>
        <begin position="396"/>
        <end position="484"/>
    </location>
</feature>
<feature type="transmembrane region" description="Helical" evidence="1">
    <location>
        <begin position="485"/>
        <end position="505"/>
    </location>
</feature>
<feature type="topological domain" description="Cytoplasmic" evidence="10">
    <location>
        <begin position="506"/>
        <end position="531"/>
    </location>
</feature>
<feature type="transmembrane region" description="Helical" evidence="1">
    <location>
        <begin position="532"/>
        <end position="552"/>
    </location>
</feature>
<feature type="topological domain" description="Periplasmic" evidence="10">
    <location>
        <begin position="553"/>
        <end position="568"/>
    </location>
</feature>
<feature type="transmembrane region" description="Helical" evidence="1">
    <location>
        <begin position="569"/>
        <end position="589"/>
    </location>
</feature>
<feature type="topological domain" description="Cytoplasmic" evidence="10">
    <location>
        <begin position="590"/>
        <end position="596"/>
    </location>
</feature>
<feature type="transmembrane region" description="Helical" evidence="1">
    <location>
        <begin position="597"/>
        <end position="617"/>
    </location>
</feature>
<feature type="topological domain" description="Periplasmic" evidence="10">
    <location>
        <begin position="618"/>
        <end position="668"/>
    </location>
</feature>
<feature type="transmembrane region" description="Helical" evidence="1">
    <location>
        <begin position="669"/>
        <end position="689"/>
    </location>
</feature>
<feature type="topological domain" description="Cytoplasmic" evidence="3">
    <location>
        <begin position="690"/>
        <end position="716"/>
    </location>
</feature>
<feature type="region of interest" description="Disordered" evidence="2">
    <location>
        <begin position="696"/>
        <end position="716"/>
    </location>
</feature>
<gene>
    <name evidence="8" type="primary">btsT</name>
    <name type="synonym">yjiY</name>
    <name type="ordered locus">b4354</name>
    <name type="ordered locus">JW5791</name>
</gene>
<organism>
    <name type="scientific">Escherichia coli (strain K12)</name>
    <dbReference type="NCBI Taxonomy" id="83333"/>
    <lineage>
        <taxon>Bacteria</taxon>
        <taxon>Pseudomonadati</taxon>
        <taxon>Pseudomonadota</taxon>
        <taxon>Gammaproteobacteria</taxon>
        <taxon>Enterobacterales</taxon>
        <taxon>Enterobacteriaceae</taxon>
        <taxon>Escherichia</taxon>
    </lineage>
</organism>
<accession>P39396</accession>
<accession>Q2M5W2</accession>
<dbReference type="EMBL" id="U14003">
    <property type="protein sequence ID" value="AAA97251.1"/>
    <property type="status" value="ALT_INIT"/>
    <property type="molecule type" value="Genomic_DNA"/>
</dbReference>
<dbReference type="EMBL" id="U00096">
    <property type="protein sequence ID" value="AAC77310.2"/>
    <property type="molecule type" value="Genomic_DNA"/>
</dbReference>
<dbReference type="EMBL" id="AP009048">
    <property type="protein sequence ID" value="BAE78344.1"/>
    <property type="molecule type" value="Genomic_DNA"/>
</dbReference>
<dbReference type="PIR" id="S56580">
    <property type="entry name" value="S56580"/>
</dbReference>
<dbReference type="RefSeq" id="NP_418774.2">
    <property type="nucleotide sequence ID" value="NC_000913.3"/>
</dbReference>
<dbReference type="RefSeq" id="WP_001299714.1">
    <property type="nucleotide sequence ID" value="NZ_LN832404.1"/>
</dbReference>
<dbReference type="BioGRID" id="4261745">
    <property type="interactions" value="187"/>
</dbReference>
<dbReference type="DIP" id="DIP-12649N"/>
<dbReference type="FunCoup" id="P39396">
    <property type="interactions" value="169"/>
</dbReference>
<dbReference type="IntAct" id="P39396">
    <property type="interactions" value="2"/>
</dbReference>
<dbReference type="STRING" id="511145.b4354"/>
<dbReference type="jPOST" id="P39396"/>
<dbReference type="PaxDb" id="511145-b4354"/>
<dbReference type="EnsemblBacteria" id="AAC77310">
    <property type="protein sequence ID" value="AAC77310"/>
    <property type="gene ID" value="b4354"/>
</dbReference>
<dbReference type="GeneID" id="948914"/>
<dbReference type="KEGG" id="ecj:JW5791"/>
<dbReference type="KEGG" id="eco:b4354"/>
<dbReference type="KEGG" id="ecoc:C3026_23520"/>
<dbReference type="PATRIC" id="fig|1411691.4.peg.2332"/>
<dbReference type="EchoBASE" id="EB2472"/>
<dbReference type="eggNOG" id="COG1966">
    <property type="taxonomic scope" value="Bacteria"/>
</dbReference>
<dbReference type="HOGENOM" id="CLU_010531_2_0_6"/>
<dbReference type="InParanoid" id="P39396"/>
<dbReference type="OMA" id="KHIPWMI"/>
<dbReference type="OrthoDB" id="9761224at2"/>
<dbReference type="PhylomeDB" id="P39396"/>
<dbReference type="BioCyc" id="EcoCyc:G7942-MONOMER"/>
<dbReference type="BioCyc" id="MetaCyc:G7942-MONOMER"/>
<dbReference type="PRO" id="PR:P39396"/>
<dbReference type="Proteomes" id="UP000000625">
    <property type="component" value="Chromosome"/>
</dbReference>
<dbReference type="GO" id="GO:0005886">
    <property type="term" value="C:plasma membrane"/>
    <property type="evidence" value="ECO:0000314"/>
    <property type="project" value="EcoCyc"/>
</dbReference>
<dbReference type="GO" id="GO:0005477">
    <property type="term" value="F:pyruvate secondary active transmembrane transporter activity"/>
    <property type="evidence" value="ECO:0000314"/>
    <property type="project" value="EcoCyc"/>
</dbReference>
<dbReference type="GO" id="GO:0015293">
    <property type="term" value="F:symporter activity"/>
    <property type="evidence" value="ECO:0007669"/>
    <property type="project" value="UniProtKB-KW"/>
</dbReference>
<dbReference type="GO" id="GO:0031669">
    <property type="term" value="P:cellular response to nutrient levels"/>
    <property type="evidence" value="ECO:0000270"/>
    <property type="project" value="EcoCyc"/>
</dbReference>
<dbReference type="GO" id="GO:0009267">
    <property type="term" value="P:cellular response to starvation"/>
    <property type="evidence" value="ECO:0000304"/>
    <property type="project" value="EcoCyc"/>
</dbReference>
<dbReference type="GO" id="GO:0006974">
    <property type="term" value="P:DNA damage response"/>
    <property type="evidence" value="ECO:0000270"/>
    <property type="project" value="EcoliWiki"/>
</dbReference>
<dbReference type="GO" id="GO:0006849">
    <property type="term" value="P:plasma membrane pyruvate transport"/>
    <property type="evidence" value="ECO:0000314"/>
    <property type="project" value="EcoCyc"/>
</dbReference>
<dbReference type="InterPro" id="IPR051605">
    <property type="entry name" value="CstA"/>
</dbReference>
<dbReference type="InterPro" id="IPR003706">
    <property type="entry name" value="CstA_N"/>
</dbReference>
<dbReference type="PANTHER" id="PTHR30252">
    <property type="entry name" value="INNER MEMBRANE PEPTIDE TRANSPORTER"/>
    <property type="match status" value="1"/>
</dbReference>
<dbReference type="PANTHER" id="PTHR30252:SF3">
    <property type="entry name" value="PYRUVATE_PROTON SYMPORTER BTST"/>
    <property type="match status" value="1"/>
</dbReference>
<dbReference type="Pfam" id="PF02554">
    <property type="entry name" value="CstA"/>
    <property type="match status" value="2"/>
</dbReference>
<reference key="1">
    <citation type="journal article" date="1995" name="Nucleic Acids Res.">
        <title>Analysis of the Escherichia coli genome VI: DNA sequence of the region from 92.8 through 100 minutes.</title>
        <authorList>
            <person name="Burland V.D."/>
            <person name="Plunkett G. III"/>
            <person name="Sofia H.J."/>
            <person name="Daniels D.L."/>
            <person name="Blattner F.R."/>
        </authorList>
    </citation>
    <scope>NUCLEOTIDE SEQUENCE [LARGE SCALE GENOMIC DNA]</scope>
    <source>
        <strain>K12 / MG1655 / ATCC 47076</strain>
    </source>
</reference>
<reference key="2">
    <citation type="journal article" date="1997" name="Science">
        <title>The complete genome sequence of Escherichia coli K-12.</title>
        <authorList>
            <person name="Blattner F.R."/>
            <person name="Plunkett G. III"/>
            <person name="Bloch C.A."/>
            <person name="Perna N.T."/>
            <person name="Burland V."/>
            <person name="Riley M."/>
            <person name="Collado-Vides J."/>
            <person name="Glasner J.D."/>
            <person name="Rode C.K."/>
            <person name="Mayhew G.F."/>
            <person name="Gregor J."/>
            <person name="Davis N.W."/>
            <person name="Kirkpatrick H.A."/>
            <person name="Goeden M.A."/>
            <person name="Rose D.J."/>
            <person name="Mau B."/>
            <person name="Shao Y."/>
        </authorList>
    </citation>
    <scope>NUCLEOTIDE SEQUENCE [LARGE SCALE GENOMIC DNA]</scope>
    <source>
        <strain>K12 / MG1655 / ATCC 47076</strain>
    </source>
</reference>
<reference key="3">
    <citation type="journal article" date="2006" name="Mol. Syst. Biol.">
        <title>Highly accurate genome sequences of Escherichia coli K-12 strains MG1655 and W3110.</title>
        <authorList>
            <person name="Hayashi K."/>
            <person name="Morooka N."/>
            <person name="Yamamoto Y."/>
            <person name="Fujita K."/>
            <person name="Isono K."/>
            <person name="Choi S."/>
            <person name="Ohtsubo E."/>
            <person name="Baba T."/>
            <person name="Wanner B.L."/>
            <person name="Mori H."/>
            <person name="Horiuchi T."/>
        </authorList>
    </citation>
    <scope>NUCLEOTIDE SEQUENCE [LARGE SCALE GENOMIC DNA]</scope>
    <source>
        <strain>K12 / W3110 / ATCC 27325 / DSM 5911</strain>
    </source>
</reference>
<reference key="4">
    <citation type="journal article" date="2005" name="Science">
        <title>Global topology analysis of the Escherichia coli inner membrane proteome.</title>
        <authorList>
            <person name="Daley D.O."/>
            <person name="Rapp M."/>
            <person name="Granseth E."/>
            <person name="Melen K."/>
            <person name="Drew D."/>
            <person name="von Heijne G."/>
        </authorList>
    </citation>
    <scope>SUBCELLULAR LOCATION</scope>
    <scope>TOPOLOGY [LARGE SCALE ANALYSIS]</scope>
    <source>
        <strain>K12 / MG1655 / ATCC 47076</strain>
    </source>
</reference>
<reference key="5">
    <citation type="journal article" date="2009" name="J. Bacteriol.">
        <title>Involvement of the leucine response transcription factor LeuO in regulation of the genes for sulfa drug efflux.</title>
        <authorList>
            <person name="Shimada T."/>
            <person name="Yamamoto K."/>
            <person name="Ishihama A."/>
        </authorList>
    </citation>
    <scope>OPERON STRUCTURE</scope>
    <scope>INDUCTION</scope>
    <source>
        <strain>K12 / BW25113</strain>
    </source>
</reference>
<reference key="6">
    <citation type="journal article" date="2012" name="J. Bacteriol.">
        <title>First insights into the unexplored two-component system YehU/YehT in Escherichia coli.</title>
        <authorList>
            <person name="Kraxenberger T."/>
            <person name="Fried L."/>
            <person name="Behr S."/>
            <person name="Jung K."/>
        </authorList>
    </citation>
    <scope>SUBCELLULAR LOCATION</scope>
    <scope>INDUCTION</scope>
    <source>
        <strain>K12 / MG1655 / ATCC 47076</strain>
    </source>
</reference>
<reference key="7">
    <citation type="journal article" date="2014" name="J. Bacteriol.">
        <title>Identification of a novel nutrient-sensing histidine kinase/response regulator network in Escherichia coli.</title>
        <authorList>
            <person name="Behr S."/>
            <person name="Fried L."/>
            <person name="Jung K."/>
        </authorList>
    </citation>
    <scope>FUNCTION</scope>
    <scope>INTERACTION WITH BTSS AND YPDA</scope>
    <scope>INDUCTION</scope>
    <source>
        <strain>K12 / MG1655 / ATCC 47076</strain>
    </source>
</reference>
<reference key="8">
    <citation type="journal article" date="2018" name="J. Bacteriol.">
        <title>BtsT - a novel and specific pyruvate/H+ symporter in Escherichia coli.</title>
        <authorList>
            <person name="Kristoficova I."/>
            <person name="Vilhena C."/>
            <person name="Behr S."/>
            <person name="Jung K."/>
        </authorList>
    </citation>
    <scope>FUNCTION</scope>
    <scope>CATALYTIC ACTIVITY</scope>
    <scope>ACTIVITY REGULATION</scope>
    <scope>BIOPHYSICOCHEMICAL PROPERTIES</scope>
    <scope>SUBCELLULAR LOCATION</scope>
    <scope>TOPOLOGY</scope>
</reference>
<sequence>MDTKKIFKHIPWVILGIIGAFCLAVVALRRGEHISALWIVVASVSVYLVAYRYYSLYIAQKVMKLDPTRATPAVINNDGLNYVPTNRYVLFGHHFAAIAGAGPLVGPVLAAQMGYLPGTLWLLAGVVLAGAVQDFMVLFISSRRNGASLGEMIKEEMGPVPGTIALFGCFLIMIIILAVLALIVVKALAESPWGVFTVCSTVPIALFMGIYMRFIRPGRVGEVSVIGIVLLVASIYFGGVIAHDPYWGPALTFKDTTITFALIGYAFVSALLPVWLILAPRDYLATFLKIGVIVGLALGIVVLNPELKMPAMTQYIDGTGPLWKGALFPFLFITIACGAVSGFHALISSGTTPKLLANETDARFIGYGAMLMESFVAIMALVAASIIEPGLYFAMNTPPAGLGITMPNLHEMGGENAPIIMAQLKDVTAHAAATVSSWGFVISPEQILQTAKDIGEPSVLNRAGGAPTLAVGIAHVFHKVLPMADMGFWYHFGILFEALFILTALDAGTRSGRFMLQDLLGNFIPFLKKTDSLVAGIIGTAGCVGLWGYLLYQGVVDPLGGVKSLWPLFGISNQMLAAVALVLGTVVLIKMKRTQYIWVTVVPAVWLLICTTWALGLKLFSTNPQMEGFFYMASQYKEKIANGTDLTAQQIANMNHIVVNNYTNAGLSILFLIVVYSIIFYGFKTWLAVRNSDKRTDKETPYVPIPEGGVKISSHH</sequence>
<evidence type="ECO:0000255" key="1"/>
<evidence type="ECO:0000256" key="2">
    <source>
        <dbReference type="SAM" id="MobiDB-lite"/>
    </source>
</evidence>
<evidence type="ECO:0000269" key="3">
    <source>
    </source>
</evidence>
<evidence type="ECO:0000269" key="4">
    <source>
    </source>
</evidence>
<evidence type="ECO:0000269" key="5">
    <source>
    </source>
</evidence>
<evidence type="ECO:0000269" key="6">
    <source>
    </source>
</evidence>
<evidence type="ECO:0000269" key="7">
    <source>
    </source>
</evidence>
<evidence type="ECO:0000303" key="8">
    <source>
    </source>
</evidence>
<evidence type="ECO:0000305" key="9"/>
<evidence type="ECO:0000305" key="10">
    <source>
    </source>
</evidence>
<evidence type="ECO:0000305" key="11">
    <source>
    </source>
</evidence>